<reference key="1">
    <citation type="journal article" date="2009" name="J. Bacteriol.">
        <title>Complete genome sequence of the extremophilic Bacillus cereus strain Q1 with industrial applications.</title>
        <authorList>
            <person name="Xiong Z."/>
            <person name="Jiang Y."/>
            <person name="Qi D."/>
            <person name="Lu H."/>
            <person name="Yang F."/>
            <person name="Yang J."/>
            <person name="Chen L."/>
            <person name="Sun L."/>
            <person name="Xu X."/>
            <person name="Xue Y."/>
            <person name="Zhu Y."/>
            <person name="Jin Q."/>
        </authorList>
    </citation>
    <scope>NUCLEOTIDE SEQUENCE [LARGE SCALE GENOMIC DNA]</scope>
    <source>
        <strain>Q1</strain>
    </source>
</reference>
<evidence type="ECO:0000255" key="1">
    <source>
        <dbReference type="HAMAP-Rule" id="MF_00412"/>
    </source>
</evidence>
<accession>B9J498</accession>
<sequence>MNEVLAKGKRAKEVARELVLKSTHQKNEALAAIANQLISETAYILEENKRDIEEGKAKGFSDSLLDRLMLNEQRIVDMTEGIKQLIELRDPVGECVSAWERPNGLSIQEMRVPLGVVGMIYEARPNVTVDAATICLKTGNAVILRGSSSAIHSNKAIVAVIHRALKQTSLPEESVQLIEDTTRDSAKQLFTMNDYLDVLIPRGGKQLIDTVVREASVPVLETGAGNCHIFIDETADKQMAFDIIINAKTQRPSVCNAIETIVLHENWAQQYGSELFSSLKERGVELRGDQKALAMDSSIVLASEEDWGTEFLSLTLAVKIVSSIEEAIHHINTYGSMHSEAIISENEENVSKFFVSVDAAALYHNASTRFTDGSEFGFGAEIGISTQKLHVRGPMGLPALTSTKYIIRGNGQIRK</sequence>
<comment type="function">
    <text evidence="1">Catalyzes the NADPH-dependent reduction of L-glutamate 5-phosphate into L-glutamate 5-semialdehyde and phosphate. The product spontaneously undergoes cyclization to form 1-pyrroline-5-carboxylate.</text>
</comment>
<comment type="catalytic activity">
    <reaction evidence="1">
        <text>L-glutamate 5-semialdehyde + phosphate + NADP(+) = L-glutamyl 5-phosphate + NADPH + H(+)</text>
        <dbReference type="Rhea" id="RHEA:19541"/>
        <dbReference type="ChEBI" id="CHEBI:15378"/>
        <dbReference type="ChEBI" id="CHEBI:43474"/>
        <dbReference type="ChEBI" id="CHEBI:57783"/>
        <dbReference type="ChEBI" id="CHEBI:58066"/>
        <dbReference type="ChEBI" id="CHEBI:58274"/>
        <dbReference type="ChEBI" id="CHEBI:58349"/>
        <dbReference type="EC" id="1.2.1.41"/>
    </reaction>
</comment>
<comment type="pathway">
    <text evidence="1">Amino-acid biosynthesis; L-proline biosynthesis; L-glutamate 5-semialdehyde from L-glutamate: step 2/2.</text>
</comment>
<comment type="subcellular location">
    <subcellularLocation>
        <location evidence="1">Cytoplasm</location>
    </subcellularLocation>
</comment>
<comment type="similarity">
    <text evidence="1">Belongs to the gamma-glutamyl phosphate reductase family.</text>
</comment>
<proteinExistence type="inferred from homology"/>
<protein>
    <recommendedName>
        <fullName evidence="1">Gamma-glutamyl phosphate reductase</fullName>
        <shortName evidence="1">GPR</shortName>
        <ecNumber evidence="1">1.2.1.41</ecNumber>
    </recommendedName>
    <alternativeName>
        <fullName evidence="1">Glutamate-5-semialdehyde dehydrogenase</fullName>
    </alternativeName>
    <alternativeName>
        <fullName evidence="1">Glutamyl-gamma-semialdehyde dehydrogenase</fullName>
        <shortName evidence="1">GSA dehydrogenase</shortName>
    </alternativeName>
</protein>
<gene>
    <name evidence="1" type="primary">proA</name>
    <name type="ordered locus">BCQ_2809</name>
</gene>
<feature type="chain" id="PRO_1000193570" description="Gamma-glutamyl phosphate reductase">
    <location>
        <begin position="1"/>
        <end position="415"/>
    </location>
</feature>
<name>PROA_BACCQ</name>
<dbReference type="EC" id="1.2.1.41" evidence="1"/>
<dbReference type="EMBL" id="CP000227">
    <property type="protein sequence ID" value="ACM13237.1"/>
    <property type="molecule type" value="Genomic_DNA"/>
</dbReference>
<dbReference type="SMR" id="B9J498"/>
<dbReference type="KEGG" id="bcq:BCQ_2809"/>
<dbReference type="HOGENOM" id="CLU_030231_0_0_9"/>
<dbReference type="UniPathway" id="UPA00098">
    <property type="reaction ID" value="UER00360"/>
</dbReference>
<dbReference type="Proteomes" id="UP000000441">
    <property type="component" value="Chromosome"/>
</dbReference>
<dbReference type="GO" id="GO:0005737">
    <property type="term" value="C:cytoplasm"/>
    <property type="evidence" value="ECO:0007669"/>
    <property type="project" value="UniProtKB-SubCell"/>
</dbReference>
<dbReference type="GO" id="GO:0004350">
    <property type="term" value="F:glutamate-5-semialdehyde dehydrogenase activity"/>
    <property type="evidence" value="ECO:0007669"/>
    <property type="project" value="UniProtKB-UniRule"/>
</dbReference>
<dbReference type="GO" id="GO:0050661">
    <property type="term" value="F:NADP binding"/>
    <property type="evidence" value="ECO:0007669"/>
    <property type="project" value="InterPro"/>
</dbReference>
<dbReference type="GO" id="GO:0055129">
    <property type="term" value="P:L-proline biosynthetic process"/>
    <property type="evidence" value="ECO:0007669"/>
    <property type="project" value="UniProtKB-UniRule"/>
</dbReference>
<dbReference type="CDD" id="cd07079">
    <property type="entry name" value="ALDH_F18-19_ProA-GPR"/>
    <property type="match status" value="1"/>
</dbReference>
<dbReference type="FunFam" id="3.40.309.10:FF:000006">
    <property type="entry name" value="Gamma-glutamyl phosphate reductase"/>
    <property type="match status" value="1"/>
</dbReference>
<dbReference type="Gene3D" id="3.40.605.10">
    <property type="entry name" value="Aldehyde Dehydrogenase, Chain A, domain 1"/>
    <property type="match status" value="1"/>
</dbReference>
<dbReference type="Gene3D" id="3.40.309.10">
    <property type="entry name" value="Aldehyde Dehydrogenase, Chain A, domain 2"/>
    <property type="match status" value="1"/>
</dbReference>
<dbReference type="HAMAP" id="MF_00412">
    <property type="entry name" value="ProA"/>
    <property type="match status" value="1"/>
</dbReference>
<dbReference type="InterPro" id="IPR016161">
    <property type="entry name" value="Ald_DH/histidinol_DH"/>
</dbReference>
<dbReference type="InterPro" id="IPR016163">
    <property type="entry name" value="Ald_DH_C"/>
</dbReference>
<dbReference type="InterPro" id="IPR016162">
    <property type="entry name" value="Ald_DH_N"/>
</dbReference>
<dbReference type="InterPro" id="IPR015590">
    <property type="entry name" value="Aldehyde_DH_dom"/>
</dbReference>
<dbReference type="InterPro" id="IPR020593">
    <property type="entry name" value="G-glutamylP_reductase_CS"/>
</dbReference>
<dbReference type="InterPro" id="IPR012134">
    <property type="entry name" value="Glu-5-SA_DH"/>
</dbReference>
<dbReference type="InterPro" id="IPR000965">
    <property type="entry name" value="GPR_dom"/>
</dbReference>
<dbReference type="NCBIfam" id="NF001221">
    <property type="entry name" value="PRK00197.1"/>
    <property type="match status" value="1"/>
</dbReference>
<dbReference type="NCBIfam" id="TIGR00407">
    <property type="entry name" value="proA"/>
    <property type="match status" value="1"/>
</dbReference>
<dbReference type="PANTHER" id="PTHR11063:SF8">
    <property type="entry name" value="DELTA-1-PYRROLINE-5-CARBOXYLATE SYNTHASE"/>
    <property type="match status" value="1"/>
</dbReference>
<dbReference type="PANTHER" id="PTHR11063">
    <property type="entry name" value="GLUTAMATE SEMIALDEHYDE DEHYDROGENASE"/>
    <property type="match status" value="1"/>
</dbReference>
<dbReference type="Pfam" id="PF00171">
    <property type="entry name" value="Aldedh"/>
    <property type="match status" value="1"/>
</dbReference>
<dbReference type="PIRSF" id="PIRSF000151">
    <property type="entry name" value="GPR"/>
    <property type="match status" value="1"/>
</dbReference>
<dbReference type="SUPFAM" id="SSF53720">
    <property type="entry name" value="ALDH-like"/>
    <property type="match status" value="1"/>
</dbReference>
<dbReference type="PROSITE" id="PS01223">
    <property type="entry name" value="PROA"/>
    <property type="match status" value="1"/>
</dbReference>
<keyword id="KW-0028">Amino-acid biosynthesis</keyword>
<keyword id="KW-0963">Cytoplasm</keyword>
<keyword id="KW-0521">NADP</keyword>
<keyword id="KW-0560">Oxidoreductase</keyword>
<keyword id="KW-0641">Proline biosynthesis</keyword>
<organism>
    <name type="scientific">Bacillus cereus (strain Q1)</name>
    <dbReference type="NCBI Taxonomy" id="361100"/>
    <lineage>
        <taxon>Bacteria</taxon>
        <taxon>Bacillati</taxon>
        <taxon>Bacillota</taxon>
        <taxon>Bacilli</taxon>
        <taxon>Bacillales</taxon>
        <taxon>Bacillaceae</taxon>
        <taxon>Bacillus</taxon>
        <taxon>Bacillus cereus group</taxon>
    </lineage>
</organism>